<evidence type="ECO:0000255" key="1">
    <source>
        <dbReference type="HAMAP-Rule" id="MF_01341"/>
    </source>
</evidence>
<evidence type="ECO:0000256" key="2">
    <source>
        <dbReference type="SAM" id="MobiDB-lite"/>
    </source>
</evidence>
<evidence type="ECO:0000305" key="3"/>
<proteinExistence type="inferred from homology"/>
<dbReference type="EMBL" id="CR626927">
    <property type="protein sequence ID" value="CAH09660.1"/>
    <property type="molecule type" value="Genomic_DNA"/>
</dbReference>
<dbReference type="RefSeq" id="WP_005804135.1">
    <property type="nucleotide sequence ID" value="NZ_UFTH01000001.1"/>
</dbReference>
<dbReference type="SMR" id="Q5L8C8"/>
<dbReference type="PaxDb" id="272559-BF9343_3879"/>
<dbReference type="GeneID" id="60370041"/>
<dbReference type="KEGG" id="bfs:BF9343_3879"/>
<dbReference type="eggNOG" id="COG0200">
    <property type="taxonomic scope" value="Bacteria"/>
</dbReference>
<dbReference type="HOGENOM" id="CLU_055188_4_2_10"/>
<dbReference type="Proteomes" id="UP000006731">
    <property type="component" value="Chromosome"/>
</dbReference>
<dbReference type="GO" id="GO:0022625">
    <property type="term" value="C:cytosolic large ribosomal subunit"/>
    <property type="evidence" value="ECO:0007669"/>
    <property type="project" value="TreeGrafter"/>
</dbReference>
<dbReference type="GO" id="GO:0019843">
    <property type="term" value="F:rRNA binding"/>
    <property type="evidence" value="ECO:0007669"/>
    <property type="project" value="UniProtKB-UniRule"/>
</dbReference>
<dbReference type="GO" id="GO:0003735">
    <property type="term" value="F:structural constituent of ribosome"/>
    <property type="evidence" value="ECO:0007669"/>
    <property type="project" value="InterPro"/>
</dbReference>
<dbReference type="GO" id="GO:0006412">
    <property type="term" value="P:translation"/>
    <property type="evidence" value="ECO:0007669"/>
    <property type="project" value="UniProtKB-UniRule"/>
</dbReference>
<dbReference type="Gene3D" id="3.100.10.10">
    <property type="match status" value="1"/>
</dbReference>
<dbReference type="HAMAP" id="MF_01341">
    <property type="entry name" value="Ribosomal_uL15"/>
    <property type="match status" value="1"/>
</dbReference>
<dbReference type="InterPro" id="IPR030878">
    <property type="entry name" value="Ribosomal_uL15"/>
</dbReference>
<dbReference type="InterPro" id="IPR021131">
    <property type="entry name" value="Ribosomal_uL15/eL18"/>
</dbReference>
<dbReference type="InterPro" id="IPR036227">
    <property type="entry name" value="Ribosomal_uL15/eL18_sf"/>
</dbReference>
<dbReference type="InterPro" id="IPR005749">
    <property type="entry name" value="Ribosomal_uL15_bac-type"/>
</dbReference>
<dbReference type="InterPro" id="IPR001196">
    <property type="entry name" value="Ribosomal_uL15_CS"/>
</dbReference>
<dbReference type="NCBIfam" id="TIGR01071">
    <property type="entry name" value="rplO_bact"/>
    <property type="match status" value="1"/>
</dbReference>
<dbReference type="PANTHER" id="PTHR12934">
    <property type="entry name" value="50S RIBOSOMAL PROTEIN L15"/>
    <property type="match status" value="1"/>
</dbReference>
<dbReference type="PANTHER" id="PTHR12934:SF11">
    <property type="entry name" value="LARGE RIBOSOMAL SUBUNIT PROTEIN UL15M"/>
    <property type="match status" value="1"/>
</dbReference>
<dbReference type="Pfam" id="PF00828">
    <property type="entry name" value="Ribosomal_L27A"/>
    <property type="match status" value="1"/>
</dbReference>
<dbReference type="SUPFAM" id="SSF52080">
    <property type="entry name" value="Ribosomal proteins L15p and L18e"/>
    <property type="match status" value="1"/>
</dbReference>
<dbReference type="PROSITE" id="PS00475">
    <property type="entry name" value="RIBOSOMAL_L15"/>
    <property type="match status" value="1"/>
</dbReference>
<reference key="1">
    <citation type="journal article" date="2005" name="Science">
        <title>Extensive DNA inversions in the B. fragilis genome control variable gene expression.</title>
        <authorList>
            <person name="Cerdeno-Tarraga A.-M."/>
            <person name="Patrick S."/>
            <person name="Crossman L.C."/>
            <person name="Blakely G."/>
            <person name="Abratt V."/>
            <person name="Lennard N."/>
            <person name="Poxton I."/>
            <person name="Duerden B."/>
            <person name="Harris B."/>
            <person name="Quail M.A."/>
            <person name="Barron A."/>
            <person name="Clark L."/>
            <person name="Corton C."/>
            <person name="Doggett J."/>
            <person name="Holden M.T.G."/>
            <person name="Larke N."/>
            <person name="Line A."/>
            <person name="Lord A."/>
            <person name="Norbertczak H."/>
            <person name="Ormond D."/>
            <person name="Price C."/>
            <person name="Rabbinowitsch E."/>
            <person name="Woodward J."/>
            <person name="Barrell B.G."/>
            <person name="Parkhill J."/>
        </authorList>
    </citation>
    <scope>NUCLEOTIDE SEQUENCE [LARGE SCALE GENOMIC DNA]</scope>
    <source>
        <strain>ATCC 25285 / DSM 2151 / CCUG 4856 / JCM 11019 / LMG 10263 / NCTC 9343 / Onslow / VPI 2553 / EN-2</strain>
    </source>
</reference>
<accession>Q5L8C8</accession>
<keyword id="KW-0687">Ribonucleoprotein</keyword>
<keyword id="KW-0689">Ribosomal protein</keyword>
<keyword id="KW-0694">RNA-binding</keyword>
<keyword id="KW-0699">rRNA-binding</keyword>
<feature type="chain" id="PRO_0000104677" description="Large ribosomal subunit protein uL15">
    <location>
        <begin position="1"/>
        <end position="148"/>
    </location>
</feature>
<feature type="region of interest" description="Disordered" evidence="2">
    <location>
        <begin position="1"/>
        <end position="50"/>
    </location>
</feature>
<feature type="compositionally biased region" description="Gly residues" evidence="2">
    <location>
        <begin position="21"/>
        <end position="31"/>
    </location>
</feature>
<organism>
    <name type="scientific">Bacteroides fragilis (strain ATCC 25285 / DSM 2151 / CCUG 4856 / JCM 11019 / LMG 10263 / NCTC 9343 / Onslow / VPI 2553 / EN-2)</name>
    <dbReference type="NCBI Taxonomy" id="272559"/>
    <lineage>
        <taxon>Bacteria</taxon>
        <taxon>Pseudomonadati</taxon>
        <taxon>Bacteroidota</taxon>
        <taxon>Bacteroidia</taxon>
        <taxon>Bacteroidales</taxon>
        <taxon>Bacteroidaceae</taxon>
        <taxon>Bacteroides</taxon>
    </lineage>
</organism>
<gene>
    <name evidence="1" type="primary">rplO</name>
    <name type="ordered locus">BF3984</name>
</gene>
<name>RL15_BACFN</name>
<sequence>MNLSNLKPAEGSTKTRKRIGRGPGSGLGGTSTRGHKGAKSRSGYSKKIGFEGGQMPLQRRVPKFGFKNINRIEYKAINLETIQKLAEAKKLEKVGVNDFIEAGFISSSQLVKVLGNGTLTAKLSVEAHAFSKSAVAAIEAAGGNVVKL</sequence>
<comment type="function">
    <text evidence="1">Binds to the 23S rRNA.</text>
</comment>
<comment type="subunit">
    <text evidence="1">Part of the 50S ribosomal subunit.</text>
</comment>
<comment type="similarity">
    <text evidence="1">Belongs to the universal ribosomal protein uL15 family.</text>
</comment>
<protein>
    <recommendedName>
        <fullName evidence="1">Large ribosomal subunit protein uL15</fullName>
    </recommendedName>
    <alternativeName>
        <fullName evidence="3">50S ribosomal protein L15</fullName>
    </alternativeName>
</protein>